<name>PSTS_SHIFL</name>
<gene>
    <name type="primary">pstS</name>
    <name type="ordered locus">SF3727</name>
    <name type="ordered locus">S4045</name>
</gene>
<organism>
    <name type="scientific">Shigella flexneri</name>
    <dbReference type="NCBI Taxonomy" id="623"/>
    <lineage>
        <taxon>Bacteria</taxon>
        <taxon>Pseudomonadati</taxon>
        <taxon>Pseudomonadota</taxon>
        <taxon>Gammaproteobacteria</taxon>
        <taxon>Enterobacterales</taxon>
        <taxon>Enterobacteriaceae</taxon>
        <taxon>Shigella</taxon>
    </lineage>
</organism>
<keyword id="KW-0574">Periplasm</keyword>
<keyword id="KW-0592">Phosphate transport</keyword>
<keyword id="KW-1185">Reference proteome</keyword>
<keyword id="KW-0732">Signal</keyword>
<keyword id="KW-0813">Transport</keyword>
<protein>
    <recommendedName>
        <fullName>Phosphate-binding protein PstS</fullName>
        <shortName>PBP</shortName>
    </recommendedName>
</protein>
<evidence type="ECO:0000250" key="1"/>
<evidence type="ECO:0000250" key="2">
    <source>
        <dbReference type="UniProtKB" id="P9WGT7"/>
    </source>
</evidence>
<evidence type="ECO:0000305" key="3"/>
<sequence length="346" mass="37024">MKVMRTTVATVVAATLSMSAFSVFAEASLTGAGATFPAPVYAKWADTYQKETGNKVNYQGIGSSGGVKQIIANTVDFGASDAPLSDEKLAQEGLFQFPTVIGGVVLAVNIPGLKSGELVLDGKTLGDIYLGKIKKWDDEAIAKLNPGLKLPSQNIAVVRRADGSGTSFVFTSYLAKVNEEWKNNVGTGSTVKWPIGLGGKGNDGIAAFVQRLPGAIGYVEYAYAKQNNLAYTKLISADGKPVSPTEENFANAAKGADWSKTFAQDLTNQKGEDAWPITSTTFILIHKDQKKPEQGTEVLKFFDWAYKTGAKQANDLDYASLPDSVVEQVRAAWKTNIKDSSGKPLY</sequence>
<proteinExistence type="inferred from homology"/>
<dbReference type="EMBL" id="AE005674">
    <property type="protein sequence ID" value="AAN45173.1"/>
    <property type="molecule type" value="Genomic_DNA"/>
</dbReference>
<dbReference type="EMBL" id="AE014073">
    <property type="protein sequence ID" value="AAP19025.1"/>
    <property type="molecule type" value="Genomic_DNA"/>
</dbReference>
<dbReference type="RefSeq" id="NP_709466.1">
    <property type="nucleotide sequence ID" value="NC_004337.2"/>
</dbReference>
<dbReference type="RefSeq" id="WP_000867146.1">
    <property type="nucleotide sequence ID" value="NZ_WPGW01000131.1"/>
</dbReference>
<dbReference type="SMR" id="P0AG83"/>
<dbReference type="STRING" id="198214.SF3727"/>
<dbReference type="PaxDb" id="198214-SF3727"/>
<dbReference type="GeneID" id="1026179"/>
<dbReference type="GeneID" id="75205442"/>
<dbReference type="KEGG" id="sfl:SF3727"/>
<dbReference type="KEGG" id="sfx:S4045"/>
<dbReference type="PATRIC" id="fig|198214.7.peg.4400"/>
<dbReference type="HOGENOM" id="CLU_034528_1_0_6"/>
<dbReference type="Proteomes" id="UP000001006">
    <property type="component" value="Chromosome"/>
</dbReference>
<dbReference type="Proteomes" id="UP000002673">
    <property type="component" value="Chromosome"/>
</dbReference>
<dbReference type="GO" id="GO:0043190">
    <property type="term" value="C:ATP-binding cassette (ABC) transporter complex"/>
    <property type="evidence" value="ECO:0007669"/>
    <property type="project" value="InterPro"/>
</dbReference>
<dbReference type="GO" id="GO:0042597">
    <property type="term" value="C:periplasmic space"/>
    <property type="evidence" value="ECO:0007669"/>
    <property type="project" value="UniProtKB-SubCell"/>
</dbReference>
<dbReference type="GO" id="GO:0042301">
    <property type="term" value="F:phosphate ion binding"/>
    <property type="evidence" value="ECO:0007669"/>
    <property type="project" value="InterPro"/>
</dbReference>
<dbReference type="GO" id="GO:0035435">
    <property type="term" value="P:phosphate ion transmembrane transport"/>
    <property type="evidence" value="ECO:0007669"/>
    <property type="project" value="InterPro"/>
</dbReference>
<dbReference type="CDD" id="cd01006">
    <property type="entry name" value="PBP2_phosphate_binding"/>
    <property type="match status" value="1"/>
</dbReference>
<dbReference type="Gene3D" id="3.40.190.10">
    <property type="entry name" value="Periplasmic binding protein-like II"/>
    <property type="match status" value="2"/>
</dbReference>
<dbReference type="InterPro" id="IPR005673">
    <property type="entry name" value="ABC_phos-bd_PstS"/>
</dbReference>
<dbReference type="InterPro" id="IPR024370">
    <property type="entry name" value="PBP_domain"/>
</dbReference>
<dbReference type="InterPro" id="IPR050962">
    <property type="entry name" value="Phosphate-bind_PstS"/>
</dbReference>
<dbReference type="NCBIfam" id="TIGR00975">
    <property type="entry name" value="3a0107s03"/>
    <property type="match status" value="1"/>
</dbReference>
<dbReference type="NCBIfam" id="NF008171">
    <property type="entry name" value="PRK10918.1"/>
    <property type="match status" value="1"/>
</dbReference>
<dbReference type="PANTHER" id="PTHR42996">
    <property type="entry name" value="PHOSPHATE-BINDING PROTEIN PSTS"/>
    <property type="match status" value="1"/>
</dbReference>
<dbReference type="PANTHER" id="PTHR42996:SF1">
    <property type="entry name" value="PHOSPHATE-BINDING PROTEIN PSTS"/>
    <property type="match status" value="1"/>
</dbReference>
<dbReference type="Pfam" id="PF12849">
    <property type="entry name" value="PBP_like_2"/>
    <property type="match status" value="1"/>
</dbReference>
<dbReference type="PIRSF" id="PIRSF002756">
    <property type="entry name" value="PstS"/>
    <property type="match status" value="1"/>
</dbReference>
<dbReference type="SUPFAM" id="SSF53850">
    <property type="entry name" value="Periplasmic binding protein-like II"/>
    <property type="match status" value="1"/>
</dbReference>
<reference key="1">
    <citation type="journal article" date="2002" name="Nucleic Acids Res.">
        <title>Genome sequence of Shigella flexneri 2a: insights into pathogenicity through comparison with genomes of Escherichia coli K12 and O157.</title>
        <authorList>
            <person name="Jin Q."/>
            <person name="Yuan Z."/>
            <person name="Xu J."/>
            <person name="Wang Y."/>
            <person name="Shen Y."/>
            <person name="Lu W."/>
            <person name="Wang J."/>
            <person name="Liu H."/>
            <person name="Yang J."/>
            <person name="Yang F."/>
            <person name="Zhang X."/>
            <person name="Zhang J."/>
            <person name="Yang G."/>
            <person name="Wu H."/>
            <person name="Qu D."/>
            <person name="Dong J."/>
            <person name="Sun L."/>
            <person name="Xue Y."/>
            <person name="Zhao A."/>
            <person name="Gao Y."/>
            <person name="Zhu J."/>
            <person name="Kan B."/>
            <person name="Ding K."/>
            <person name="Chen S."/>
            <person name="Cheng H."/>
            <person name="Yao Z."/>
            <person name="He B."/>
            <person name="Chen R."/>
            <person name="Ma D."/>
            <person name="Qiang B."/>
            <person name="Wen Y."/>
            <person name="Hou Y."/>
            <person name="Yu J."/>
        </authorList>
    </citation>
    <scope>NUCLEOTIDE SEQUENCE [LARGE SCALE GENOMIC DNA]</scope>
    <source>
        <strain>301 / Serotype 2a</strain>
    </source>
</reference>
<reference key="2">
    <citation type="journal article" date="2003" name="Infect. Immun.">
        <title>Complete genome sequence and comparative genomics of Shigella flexneri serotype 2a strain 2457T.</title>
        <authorList>
            <person name="Wei J."/>
            <person name="Goldberg M.B."/>
            <person name="Burland V."/>
            <person name="Venkatesan M.M."/>
            <person name="Deng W."/>
            <person name="Fournier G."/>
            <person name="Mayhew G.F."/>
            <person name="Plunkett G. III"/>
            <person name="Rose D.J."/>
            <person name="Darling A."/>
            <person name="Mau B."/>
            <person name="Perna N.T."/>
            <person name="Payne S.M."/>
            <person name="Runyen-Janecky L.J."/>
            <person name="Zhou S."/>
            <person name="Schwartz D.C."/>
            <person name="Blattner F.R."/>
        </authorList>
    </citation>
    <scope>NUCLEOTIDE SEQUENCE [LARGE SCALE GENOMIC DNA]</scope>
    <source>
        <strain>ATCC 700930 / 2457T / Serotype 2a</strain>
    </source>
</reference>
<accession>P0AG83</accession>
<accession>P06128</accession>
<accession>P76744</accession>
<feature type="signal peptide" evidence="1">
    <location>
        <begin position="1"/>
        <end position="25"/>
    </location>
</feature>
<feature type="chain" id="PRO_0000045263" description="Phosphate-binding protein PstS">
    <location>
        <begin position="26"/>
        <end position="346"/>
    </location>
</feature>
<feature type="binding site" evidence="2">
    <location>
        <begin position="34"/>
        <end position="36"/>
    </location>
    <ligand>
        <name>phosphate</name>
        <dbReference type="ChEBI" id="CHEBI:43474"/>
    </ligand>
</feature>
<feature type="binding site" evidence="2">
    <location>
        <position position="63"/>
    </location>
    <ligand>
        <name>phosphate</name>
        <dbReference type="ChEBI" id="CHEBI:43474"/>
    </ligand>
</feature>
<feature type="binding site" evidence="2">
    <location>
        <position position="81"/>
    </location>
    <ligand>
        <name>phosphate</name>
        <dbReference type="ChEBI" id="CHEBI:43474"/>
    </ligand>
</feature>
<feature type="binding site" evidence="2">
    <location>
        <begin position="164"/>
        <end position="166"/>
    </location>
    <ligand>
        <name>phosphate</name>
        <dbReference type="ChEBI" id="CHEBI:43474"/>
    </ligand>
</feature>
<comment type="function">
    <text evidence="1">Part of the ABC transporter complex PstSACB involved in phosphate import.</text>
</comment>
<comment type="subunit">
    <text evidence="3">The complex is composed of two ATP-binding proteins (PstB), two transmembrane proteins (PstC and PstA) and a solute-binding protein (PstS).</text>
</comment>
<comment type="subcellular location">
    <subcellularLocation>
        <location evidence="1">Periplasm</location>
    </subcellularLocation>
</comment>
<comment type="similarity">
    <text evidence="3">Belongs to the PstS family.</text>
</comment>